<reference key="1">
    <citation type="journal article" date="2004" name="Proc. Natl. Acad. Sci. U.S.A.">
        <title>Genome sequence of the enterobacterial phytopathogen Erwinia carotovora subsp. atroseptica and characterization of virulence factors.</title>
        <authorList>
            <person name="Bell K.S."/>
            <person name="Sebaihia M."/>
            <person name="Pritchard L."/>
            <person name="Holden M.T.G."/>
            <person name="Hyman L.J."/>
            <person name="Holeva M.C."/>
            <person name="Thomson N.R."/>
            <person name="Bentley S.D."/>
            <person name="Churcher L.J.C."/>
            <person name="Mungall K."/>
            <person name="Atkin R."/>
            <person name="Bason N."/>
            <person name="Brooks K."/>
            <person name="Chillingworth T."/>
            <person name="Clark K."/>
            <person name="Doggett J."/>
            <person name="Fraser A."/>
            <person name="Hance Z."/>
            <person name="Hauser H."/>
            <person name="Jagels K."/>
            <person name="Moule S."/>
            <person name="Norbertczak H."/>
            <person name="Ormond D."/>
            <person name="Price C."/>
            <person name="Quail M.A."/>
            <person name="Sanders M."/>
            <person name="Walker D."/>
            <person name="Whitehead S."/>
            <person name="Salmond G.P.C."/>
            <person name="Birch P.R.J."/>
            <person name="Parkhill J."/>
            <person name="Toth I.K."/>
        </authorList>
    </citation>
    <scope>NUCLEOTIDE SEQUENCE [LARGE SCALE GENOMIC DNA]</scope>
    <source>
        <strain>SCRI 1043 / ATCC BAA-672</strain>
    </source>
</reference>
<gene>
    <name evidence="1" type="primary">pnp</name>
    <name type="ordered locus">ECA0716</name>
</gene>
<dbReference type="EC" id="2.7.7.8" evidence="1"/>
<dbReference type="EMBL" id="BX950851">
    <property type="protein sequence ID" value="CAG73631.1"/>
    <property type="molecule type" value="Genomic_DNA"/>
</dbReference>
<dbReference type="RefSeq" id="WP_011092325.1">
    <property type="nucleotide sequence ID" value="NC_004547.2"/>
</dbReference>
<dbReference type="SMR" id="Q6D9A1"/>
<dbReference type="STRING" id="218491.ECA0716"/>
<dbReference type="KEGG" id="eca:ECA0716"/>
<dbReference type="PATRIC" id="fig|218491.5.peg.714"/>
<dbReference type="eggNOG" id="COG1185">
    <property type="taxonomic scope" value="Bacteria"/>
</dbReference>
<dbReference type="HOGENOM" id="CLU_004217_2_2_6"/>
<dbReference type="OrthoDB" id="9804305at2"/>
<dbReference type="Proteomes" id="UP000007966">
    <property type="component" value="Chromosome"/>
</dbReference>
<dbReference type="GO" id="GO:0005829">
    <property type="term" value="C:cytosol"/>
    <property type="evidence" value="ECO:0007669"/>
    <property type="project" value="TreeGrafter"/>
</dbReference>
<dbReference type="GO" id="GO:0000175">
    <property type="term" value="F:3'-5'-RNA exonuclease activity"/>
    <property type="evidence" value="ECO:0007669"/>
    <property type="project" value="TreeGrafter"/>
</dbReference>
<dbReference type="GO" id="GO:0000287">
    <property type="term" value="F:magnesium ion binding"/>
    <property type="evidence" value="ECO:0007669"/>
    <property type="project" value="UniProtKB-UniRule"/>
</dbReference>
<dbReference type="GO" id="GO:0004654">
    <property type="term" value="F:polyribonucleotide nucleotidyltransferase activity"/>
    <property type="evidence" value="ECO:0007669"/>
    <property type="project" value="UniProtKB-UniRule"/>
</dbReference>
<dbReference type="GO" id="GO:0003723">
    <property type="term" value="F:RNA binding"/>
    <property type="evidence" value="ECO:0007669"/>
    <property type="project" value="UniProtKB-UniRule"/>
</dbReference>
<dbReference type="GO" id="GO:0006402">
    <property type="term" value="P:mRNA catabolic process"/>
    <property type="evidence" value="ECO:0007669"/>
    <property type="project" value="UniProtKB-UniRule"/>
</dbReference>
<dbReference type="GO" id="GO:0006396">
    <property type="term" value="P:RNA processing"/>
    <property type="evidence" value="ECO:0007669"/>
    <property type="project" value="InterPro"/>
</dbReference>
<dbReference type="CDD" id="cd02393">
    <property type="entry name" value="KH-I_PNPase"/>
    <property type="match status" value="1"/>
</dbReference>
<dbReference type="CDD" id="cd11363">
    <property type="entry name" value="RNase_PH_PNPase_1"/>
    <property type="match status" value="1"/>
</dbReference>
<dbReference type="CDD" id="cd11364">
    <property type="entry name" value="RNase_PH_PNPase_2"/>
    <property type="match status" value="1"/>
</dbReference>
<dbReference type="CDD" id="cd04472">
    <property type="entry name" value="S1_PNPase"/>
    <property type="match status" value="1"/>
</dbReference>
<dbReference type="FunFam" id="2.40.50.140:FF:000023">
    <property type="entry name" value="Polyribonucleotide nucleotidyltransferase"/>
    <property type="match status" value="1"/>
</dbReference>
<dbReference type="FunFam" id="3.30.1370.10:FF:000001">
    <property type="entry name" value="Polyribonucleotide nucleotidyltransferase"/>
    <property type="match status" value="1"/>
</dbReference>
<dbReference type="FunFam" id="3.30.230.70:FF:000001">
    <property type="entry name" value="Polyribonucleotide nucleotidyltransferase"/>
    <property type="match status" value="1"/>
</dbReference>
<dbReference type="FunFam" id="3.30.230.70:FF:000002">
    <property type="entry name" value="Polyribonucleotide nucleotidyltransferase"/>
    <property type="match status" value="1"/>
</dbReference>
<dbReference type="Gene3D" id="3.30.230.70">
    <property type="entry name" value="GHMP Kinase, N-terminal domain"/>
    <property type="match status" value="2"/>
</dbReference>
<dbReference type="Gene3D" id="3.30.1370.10">
    <property type="entry name" value="K Homology domain, type 1"/>
    <property type="match status" value="1"/>
</dbReference>
<dbReference type="Gene3D" id="2.40.50.140">
    <property type="entry name" value="Nucleic acid-binding proteins"/>
    <property type="match status" value="1"/>
</dbReference>
<dbReference type="HAMAP" id="MF_01595">
    <property type="entry name" value="PNPase"/>
    <property type="match status" value="1"/>
</dbReference>
<dbReference type="InterPro" id="IPR001247">
    <property type="entry name" value="ExoRNase_PH_dom1"/>
</dbReference>
<dbReference type="InterPro" id="IPR015847">
    <property type="entry name" value="ExoRNase_PH_dom2"/>
</dbReference>
<dbReference type="InterPro" id="IPR036345">
    <property type="entry name" value="ExoRNase_PH_dom2_sf"/>
</dbReference>
<dbReference type="InterPro" id="IPR004087">
    <property type="entry name" value="KH_dom"/>
</dbReference>
<dbReference type="InterPro" id="IPR004088">
    <property type="entry name" value="KH_dom_type_1"/>
</dbReference>
<dbReference type="InterPro" id="IPR036612">
    <property type="entry name" value="KH_dom_type_1_sf"/>
</dbReference>
<dbReference type="InterPro" id="IPR012340">
    <property type="entry name" value="NA-bd_OB-fold"/>
</dbReference>
<dbReference type="InterPro" id="IPR012162">
    <property type="entry name" value="PNPase"/>
</dbReference>
<dbReference type="InterPro" id="IPR027408">
    <property type="entry name" value="PNPase/RNase_PH_dom_sf"/>
</dbReference>
<dbReference type="InterPro" id="IPR015848">
    <property type="entry name" value="PNPase_PH_RNA-bd_bac/org-type"/>
</dbReference>
<dbReference type="InterPro" id="IPR036456">
    <property type="entry name" value="PNPase_PH_RNA-bd_sf"/>
</dbReference>
<dbReference type="InterPro" id="IPR020568">
    <property type="entry name" value="Ribosomal_Su5_D2-typ_SF"/>
</dbReference>
<dbReference type="InterPro" id="IPR003029">
    <property type="entry name" value="S1_domain"/>
</dbReference>
<dbReference type="NCBIfam" id="TIGR03591">
    <property type="entry name" value="polynuc_phos"/>
    <property type="match status" value="1"/>
</dbReference>
<dbReference type="NCBIfam" id="NF008805">
    <property type="entry name" value="PRK11824.1"/>
    <property type="match status" value="1"/>
</dbReference>
<dbReference type="PANTHER" id="PTHR11252">
    <property type="entry name" value="POLYRIBONUCLEOTIDE NUCLEOTIDYLTRANSFERASE"/>
    <property type="match status" value="1"/>
</dbReference>
<dbReference type="PANTHER" id="PTHR11252:SF0">
    <property type="entry name" value="POLYRIBONUCLEOTIDE NUCLEOTIDYLTRANSFERASE 1, MITOCHONDRIAL"/>
    <property type="match status" value="1"/>
</dbReference>
<dbReference type="Pfam" id="PF00013">
    <property type="entry name" value="KH_1"/>
    <property type="match status" value="1"/>
</dbReference>
<dbReference type="Pfam" id="PF03726">
    <property type="entry name" value="PNPase"/>
    <property type="match status" value="1"/>
</dbReference>
<dbReference type="Pfam" id="PF01138">
    <property type="entry name" value="RNase_PH"/>
    <property type="match status" value="2"/>
</dbReference>
<dbReference type="Pfam" id="PF03725">
    <property type="entry name" value="RNase_PH_C"/>
    <property type="match status" value="2"/>
</dbReference>
<dbReference type="Pfam" id="PF00575">
    <property type="entry name" value="S1"/>
    <property type="match status" value="1"/>
</dbReference>
<dbReference type="PIRSF" id="PIRSF005499">
    <property type="entry name" value="PNPase"/>
    <property type="match status" value="1"/>
</dbReference>
<dbReference type="SMART" id="SM00322">
    <property type="entry name" value="KH"/>
    <property type="match status" value="1"/>
</dbReference>
<dbReference type="SMART" id="SM00316">
    <property type="entry name" value="S1"/>
    <property type="match status" value="1"/>
</dbReference>
<dbReference type="SUPFAM" id="SSF54791">
    <property type="entry name" value="Eukaryotic type KH-domain (KH-domain type I)"/>
    <property type="match status" value="1"/>
</dbReference>
<dbReference type="SUPFAM" id="SSF50249">
    <property type="entry name" value="Nucleic acid-binding proteins"/>
    <property type="match status" value="1"/>
</dbReference>
<dbReference type="SUPFAM" id="SSF46915">
    <property type="entry name" value="Polynucleotide phosphorylase/guanosine pentaphosphate synthase (PNPase/GPSI), domain 3"/>
    <property type="match status" value="1"/>
</dbReference>
<dbReference type="SUPFAM" id="SSF55666">
    <property type="entry name" value="Ribonuclease PH domain 2-like"/>
    <property type="match status" value="2"/>
</dbReference>
<dbReference type="SUPFAM" id="SSF54211">
    <property type="entry name" value="Ribosomal protein S5 domain 2-like"/>
    <property type="match status" value="2"/>
</dbReference>
<dbReference type="PROSITE" id="PS50084">
    <property type="entry name" value="KH_TYPE_1"/>
    <property type="match status" value="1"/>
</dbReference>
<dbReference type="PROSITE" id="PS50126">
    <property type="entry name" value="S1"/>
    <property type="match status" value="1"/>
</dbReference>
<accession>Q6D9A1</accession>
<protein>
    <recommendedName>
        <fullName evidence="1">Polyribonucleotide nucleotidyltransferase</fullName>
        <ecNumber evidence="1">2.7.7.8</ecNumber>
    </recommendedName>
    <alternativeName>
        <fullName evidence="1">Polynucleotide phosphorylase</fullName>
        <shortName evidence="1">PNPase</shortName>
    </alternativeName>
</protein>
<sequence length="706" mass="76485">MLNPIVRKFQYGQHTVTLETGMMARQATAAVMVSMDDTAVFVTVVGAKNAKPGQSFFPLTVNYQERTYAAGRFPGGFFRREGRPSEGETLTSRLIDRPIRPLFPEGFLNEVQVIATVVSVNPQVSPDIVAMIGASAALSLSGIPFSGPIGVARVGYLNDQYVLNPTTDELKESRLDLVVAGTQGAVLMVESEAELLSEDQMLGAVVFGHEQQQIVIENINSLVAEAGKPKWEWHAPAVNVSLEQRVQALSEARLGDAYRITEKQERYAQVNVIKTDVVAALQAEDETLNAGEIQEILGNIEKNVVRGRVLAGEPRIDGREKDMIRGLDVRTGVLPRTHGSALFTRGETQALVTATLGTERDAQNIDELTGERTDRFLLHYNFPPYCVGETGMVGSPKRREIGHGRLAKRGVLAVMPKANEFPYTVRVVSEITESNGSSSMASVCGASLALMDAGVPIKSAVAGIAMGLVKEGDNFVVLSDILGDEDHLGDMDFKVAGSREGITALQMDIKIEGITREIMQVALNQAKGARLHILGVMEQAISTPRGDISEFAPRIHTIKISTDKIKDVIGKGGSVIRALTEETGTTIEIEDDGTVRIASTDGEKAKHAIRRIEEITAEIEVGRVYQGKVTRIVDFGAFVAIGGGKEGLVHISQIADKRVEKVTDYLQMGQEVPVKVLEVDRQGRVRLSIKEANPQTQEAAAPSSEE</sequence>
<comment type="function">
    <text evidence="1">Involved in mRNA degradation. Catalyzes the phosphorolysis of single-stranded polyribonucleotides processively in the 3'- to 5'-direction.</text>
</comment>
<comment type="catalytic activity">
    <reaction evidence="1">
        <text>RNA(n+1) + phosphate = RNA(n) + a ribonucleoside 5'-diphosphate</text>
        <dbReference type="Rhea" id="RHEA:22096"/>
        <dbReference type="Rhea" id="RHEA-COMP:14527"/>
        <dbReference type="Rhea" id="RHEA-COMP:17342"/>
        <dbReference type="ChEBI" id="CHEBI:43474"/>
        <dbReference type="ChEBI" id="CHEBI:57930"/>
        <dbReference type="ChEBI" id="CHEBI:140395"/>
        <dbReference type="EC" id="2.7.7.8"/>
    </reaction>
</comment>
<comment type="cofactor">
    <cofactor evidence="1">
        <name>Mg(2+)</name>
        <dbReference type="ChEBI" id="CHEBI:18420"/>
    </cofactor>
</comment>
<comment type="subunit">
    <text evidence="1">Component of the RNA degradosome, which is a multiprotein complex involved in RNA processing and mRNA degradation.</text>
</comment>
<comment type="subcellular location">
    <subcellularLocation>
        <location evidence="1">Cytoplasm</location>
    </subcellularLocation>
</comment>
<comment type="similarity">
    <text evidence="1">Belongs to the polyribonucleotide nucleotidyltransferase family.</text>
</comment>
<organism>
    <name type="scientific">Pectobacterium atrosepticum (strain SCRI 1043 / ATCC BAA-672)</name>
    <name type="common">Erwinia carotovora subsp. atroseptica</name>
    <dbReference type="NCBI Taxonomy" id="218491"/>
    <lineage>
        <taxon>Bacteria</taxon>
        <taxon>Pseudomonadati</taxon>
        <taxon>Pseudomonadota</taxon>
        <taxon>Gammaproteobacteria</taxon>
        <taxon>Enterobacterales</taxon>
        <taxon>Pectobacteriaceae</taxon>
        <taxon>Pectobacterium</taxon>
    </lineage>
</organism>
<name>PNP_PECAS</name>
<proteinExistence type="inferred from homology"/>
<keyword id="KW-0963">Cytoplasm</keyword>
<keyword id="KW-0460">Magnesium</keyword>
<keyword id="KW-0479">Metal-binding</keyword>
<keyword id="KW-0548">Nucleotidyltransferase</keyword>
<keyword id="KW-1185">Reference proteome</keyword>
<keyword id="KW-0694">RNA-binding</keyword>
<keyword id="KW-0808">Transferase</keyword>
<evidence type="ECO:0000255" key="1">
    <source>
        <dbReference type="HAMAP-Rule" id="MF_01595"/>
    </source>
</evidence>
<feature type="chain" id="PRO_0000329637" description="Polyribonucleotide nucleotidyltransferase">
    <location>
        <begin position="1"/>
        <end position="706"/>
    </location>
</feature>
<feature type="domain" description="KH" evidence="1">
    <location>
        <begin position="553"/>
        <end position="612"/>
    </location>
</feature>
<feature type="domain" description="S1 motif" evidence="1">
    <location>
        <begin position="622"/>
        <end position="690"/>
    </location>
</feature>
<feature type="binding site" evidence="1">
    <location>
        <position position="486"/>
    </location>
    <ligand>
        <name>Mg(2+)</name>
        <dbReference type="ChEBI" id="CHEBI:18420"/>
    </ligand>
</feature>
<feature type="binding site" evidence="1">
    <location>
        <position position="492"/>
    </location>
    <ligand>
        <name>Mg(2+)</name>
        <dbReference type="ChEBI" id="CHEBI:18420"/>
    </ligand>
</feature>